<keyword id="KW-0067">ATP-binding</keyword>
<keyword id="KW-0173">Coenzyme A biosynthesis</keyword>
<keyword id="KW-0963">Cytoplasm</keyword>
<keyword id="KW-0418">Kinase</keyword>
<keyword id="KW-0479">Metal-binding</keyword>
<keyword id="KW-0547">Nucleotide-binding</keyword>
<keyword id="KW-0630">Potassium</keyword>
<keyword id="KW-0808">Transferase</keyword>
<name>COAX_DEHM1</name>
<dbReference type="EC" id="2.7.1.33" evidence="1"/>
<dbReference type="EMBL" id="CP000027">
    <property type="protein sequence ID" value="AAW40284.1"/>
    <property type="molecule type" value="Genomic_DNA"/>
</dbReference>
<dbReference type="SMR" id="Q3Z9C7"/>
<dbReference type="FunCoup" id="Q3Z9C7">
    <property type="interactions" value="264"/>
</dbReference>
<dbReference type="STRING" id="243164.DET0428"/>
<dbReference type="KEGG" id="det:DET0428"/>
<dbReference type="eggNOG" id="COG1521">
    <property type="taxonomic scope" value="Bacteria"/>
</dbReference>
<dbReference type="HOGENOM" id="CLU_066627_1_0_0"/>
<dbReference type="InParanoid" id="Q3Z9C7"/>
<dbReference type="UniPathway" id="UPA00241">
    <property type="reaction ID" value="UER00352"/>
</dbReference>
<dbReference type="Proteomes" id="UP000008289">
    <property type="component" value="Chromosome"/>
</dbReference>
<dbReference type="GO" id="GO:0005737">
    <property type="term" value="C:cytoplasm"/>
    <property type="evidence" value="ECO:0007669"/>
    <property type="project" value="UniProtKB-SubCell"/>
</dbReference>
<dbReference type="GO" id="GO:0005524">
    <property type="term" value="F:ATP binding"/>
    <property type="evidence" value="ECO:0007669"/>
    <property type="project" value="UniProtKB-UniRule"/>
</dbReference>
<dbReference type="GO" id="GO:0046872">
    <property type="term" value="F:metal ion binding"/>
    <property type="evidence" value="ECO:0007669"/>
    <property type="project" value="UniProtKB-KW"/>
</dbReference>
<dbReference type="GO" id="GO:0004594">
    <property type="term" value="F:pantothenate kinase activity"/>
    <property type="evidence" value="ECO:0007669"/>
    <property type="project" value="UniProtKB-UniRule"/>
</dbReference>
<dbReference type="GO" id="GO:0015937">
    <property type="term" value="P:coenzyme A biosynthetic process"/>
    <property type="evidence" value="ECO:0007669"/>
    <property type="project" value="UniProtKB-UniRule"/>
</dbReference>
<dbReference type="CDD" id="cd24015">
    <property type="entry name" value="ASKHA_NBD_PanK-III"/>
    <property type="match status" value="1"/>
</dbReference>
<dbReference type="Gene3D" id="3.30.420.40">
    <property type="match status" value="2"/>
</dbReference>
<dbReference type="HAMAP" id="MF_01274">
    <property type="entry name" value="Pantothen_kinase_3"/>
    <property type="match status" value="1"/>
</dbReference>
<dbReference type="InterPro" id="IPR043129">
    <property type="entry name" value="ATPase_NBD"/>
</dbReference>
<dbReference type="InterPro" id="IPR004619">
    <property type="entry name" value="Type_III_PanK"/>
</dbReference>
<dbReference type="NCBIfam" id="TIGR00671">
    <property type="entry name" value="baf"/>
    <property type="match status" value="1"/>
</dbReference>
<dbReference type="NCBIfam" id="NF009848">
    <property type="entry name" value="PRK13318.1-6"/>
    <property type="match status" value="1"/>
</dbReference>
<dbReference type="NCBIfam" id="NF009855">
    <property type="entry name" value="PRK13321.1"/>
    <property type="match status" value="1"/>
</dbReference>
<dbReference type="PANTHER" id="PTHR34265">
    <property type="entry name" value="TYPE III PANTOTHENATE KINASE"/>
    <property type="match status" value="1"/>
</dbReference>
<dbReference type="PANTHER" id="PTHR34265:SF1">
    <property type="entry name" value="TYPE III PANTOTHENATE KINASE"/>
    <property type="match status" value="1"/>
</dbReference>
<dbReference type="Pfam" id="PF03309">
    <property type="entry name" value="Pan_kinase"/>
    <property type="match status" value="1"/>
</dbReference>
<dbReference type="SUPFAM" id="SSF53067">
    <property type="entry name" value="Actin-like ATPase domain"/>
    <property type="match status" value="2"/>
</dbReference>
<organism>
    <name type="scientific">Dehalococcoides mccartyi (strain ATCC BAA-2266 / KCTC 15142 / 195)</name>
    <name type="common">Dehalococcoides ethenogenes (strain 195)</name>
    <dbReference type="NCBI Taxonomy" id="243164"/>
    <lineage>
        <taxon>Bacteria</taxon>
        <taxon>Bacillati</taxon>
        <taxon>Chloroflexota</taxon>
        <taxon>Dehalococcoidia</taxon>
        <taxon>Dehalococcoidales</taxon>
        <taxon>Dehalococcoidaceae</taxon>
        <taxon>Dehalococcoides</taxon>
    </lineage>
</organism>
<gene>
    <name evidence="1" type="primary">coaX</name>
    <name type="ordered locus">DET0428</name>
</gene>
<feature type="chain" id="PRO_0000267517" description="Type III pantothenate kinase">
    <location>
        <begin position="1"/>
        <end position="258"/>
    </location>
</feature>
<feature type="active site" description="Proton acceptor" evidence="1">
    <location>
        <position position="112"/>
    </location>
</feature>
<feature type="binding site" evidence="1">
    <location>
        <begin position="9"/>
        <end position="16"/>
    </location>
    <ligand>
        <name>ATP</name>
        <dbReference type="ChEBI" id="CHEBI:30616"/>
    </ligand>
</feature>
<feature type="binding site" evidence="1">
    <location>
        <begin position="110"/>
        <end position="113"/>
    </location>
    <ligand>
        <name>substrate</name>
    </ligand>
</feature>
<feature type="binding site" evidence="1">
    <location>
        <position position="132"/>
    </location>
    <ligand>
        <name>K(+)</name>
        <dbReference type="ChEBI" id="CHEBI:29103"/>
    </ligand>
</feature>
<feature type="binding site" evidence="1">
    <location>
        <position position="135"/>
    </location>
    <ligand>
        <name>ATP</name>
        <dbReference type="ChEBI" id="CHEBI:30616"/>
    </ligand>
</feature>
<feature type="binding site" evidence="1">
    <location>
        <position position="187"/>
    </location>
    <ligand>
        <name>substrate</name>
    </ligand>
</feature>
<comment type="function">
    <text evidence="1">Catalyzes the phosphorylation of pantothenate (Pan), the first step in CoA biosynthesis.</text>
</comment>
<comment type="catalytic activity">
    <reaction evidence="1">
        <text>(R)-pantothenate + ATP = (R)-4'-phosphopantothenate + ADP + H(+)</text>
        <dbReference type="Rhea" id="RHEA:16373"/>
        <dbReference type="ChEBI" id="CHEBI:10986"/>
        <dbReference type="ChEBI" id="CHEBI:15378"/>
        <dbReference type="ChEBI" id="CHEBI:29032"/>
        <dbReference type="ChEBI" id="CHEBI:30616"/>
        <dbReference type="ChEBI" id="CHEBI:456216"/>
        <dbReference type="EC" id="2.7.1.33"/>
    </reaction>
</comment>
<comment type="cofactor">
    <cofactor evidence="1">
        <name>NH4(+)</name>
        <dbReference type="ChEBI" id="CHEBI:28938"/>
    </cofactor>
    <cofactor evidence="1">
        <name>K(+)</name>
        <dbReference type="ChEBI" id="CHEBI:29103"/>
    </cofactor>
    <text evidence="1">A monovalent cation. Ammonium or potassium.</text>
</comment>
<comment type="pathway">
    <text evidence="1">Cofactor biosynthesis; coenzyme A biosynthesis; CoA from (R)-pantothenate: step 1/5.</text>
</comment>
<comment type="subunit">
    <text evidence="1">Homodimer.</text>
</comment>
<comment type="subcellular location">
    <subcellularLocation>
        <location evidence="1">Cytoplasm</location>
    </subcellularLocation>
</comment>
<comment type="similarity">
    <text evidence="1">Belongs to the type III pantothenate kinase family.</text>
</comment>
<protein>
    <recommendedName>
        <fullName evidence="1">Type III pantothenate kinase</fullName>
        <ecNumber evidence="1">2.7.1.33</ecNumber>
    </recommendedName>
    <alternativeName>
        <fullName evidence="1">PanK-III</fullName>
    </alternativeName>
    <alternativeName>
        <fullName evidence="1">Pantothenic acid kinase</fullName>
    </alternativeName>
</protein>
<reference key="1">
    <citation type="journal article" date="2005" name="Science">
        <title>Genome sequence of the PCE-dechlorinating bacterium Dehalococcoides ethenogenes.</title>
        <authorList>
            <person name="Seshadri R."/>
            <person name="Adrian L."/>
            <person name="Fouts D.E."/>
            <person name="Eisen J.A."/>
            <person name="Phillippy A.M."/>
            <person name="Methe B.A."/>
            <person name="Ward N.L."/>
            <person name="Nelson W.C."/>
            <person name="DeBoy R.T."/>
            <person name="Khouri H.M."/>
            <person name="Kolonay J.F."/>
            <person name="Dodson R.J."/>
            <person name="Daugherty S.C."/>
            <person name="Brinkac L.M."/>
            <person name="Sullivan S.A."/>
            <person name="Madupu R."/>
            <person name="Nelson K.E."/>
            <person name="Kang K.H."/>
            <person name="Impraim M."/>
            <person name="Tran K."/>
            <person name="Robinson J.M."/>
            <person name="Forberger H.A."/>
            <person name="Fraser C.M."/>
            <person name="Zinder S.H."/>
            <person name="Heidelberg J.F."/>
        </authorList>
    </citation>
    <scope>NUCLEOTIDE SEQUENCE [LARGE SCALE GENOMIC DNA]</scope>
    <source>
        <strain>ATCC BAA-2266 / KCTC 15142 / 195</strain>
    </source>
</reference>
<sequence length="258" mass="27490">MSEKLVAVDIGNTSVNIGIFEGEKLLANWHLGSVAQRMADEYASLLLGLLQHAGIHPEELNRVIMCSVVPPLTTTFEEVFKSYFKAAPLVVGAGIKSGVKVRMDNPREVGADRIVNAAAARVLYPGACIIVDMGTATTFDTLSEGGAYIGGAIAPGIATSAQAIAEKTSKLPKIEIIRPAKVIGSNTVSAMQSGIYFGYIGLVEELVRRIQTELGQKTRVVATGGYAALIAEGSRIFDIVRPDLTLQGLRIIYQMNQA</sequence>
<evidence type="ECO:0000255" key="1">
    <source>
        <dbReference type="HAMAP-Rule" id="MF_01274"/>
    </source>
</evidence>
<proteinExistence type="inferred from homology"/>
<accession>Q3Z9C7</accession>